<accession>Q6N5X1</accession>
<proteinExistence type="inferred from homology"/>
<feature type="chain" id="PRO_1000044433" description="Sec-independent protein translocase protein TatA">
    <location>
        <begin position="1"/>
        <end position="78"/>
    </location>
</feature>
<feature type="transmembrane region" description="Helical" evidence="1">
    <location>
        <begin position="1"/>
        <end position="21"/>
    </location>
</feature>
<feature type="region of interest" description="Disordered" evidence="2">
    <location>
        <begin position="43"/>
        <end position="78"/>
    </location>
</feature>
<feature type="compositionally biased region" description="Basic and acidic residues" evidence="2">
    <location>
        <begin position="43"/>
        <end position="60"/>
    </location>
</feature>
<feature type="compositionally biased region" description="Polar residues" evidence="2">
    <location>
        <begin position="61"/>
        <end position="72"/>
    </location>
</feature>
<reference key="1">
    <citation type="journal article" date="2004" name="Nat. Biotechnol.">
        <title>Complete genome sequence of the metabolically versatile photosynthetic bacterium Rhodopseudomonas palustris.</title>
        <authorList>
            <person name="Larimer F.W."/>
            <person name="Chain P."/>
            <person name="Hauser L."/>
            <person name="Lamerdin J.E."/>
            <person name="Malfatti S."/>
            <person name="Do L."/>
            <person name="Land M.L."/>
            <person name="Pelletier D.A."/>
            <person name="Beatty J.T."/>
            <person name="Lang A.S."/>
            <person name="Tabita F.R."/>
            <person name="Gibson J.L."/>
            <person name="Hanson T.E."/>
            <person name="Bobst C."/>
            <person name="Torres y Torres J.L."/>
            <person name="Peres C."/>
            <person name="Harrison F.H."/>
            <person name="Gibson J."/>
            <person name="Harwood C.S."/>
        </authorList>
    </citation>
    <scope>NUCLEOTIDE SEQUENCE [LARGE SCALE GENOMIC DNA]</scope>
    <source>
        <strain>ATCC BAA-98 / CGA009</strain>
    </source>
</reference>
<keyword id="KW-0997">Cell inner membrane</keyword>
<keyword id="KW-1003">Cell membrane</keyword>
<keyword id="KW-0472">Membrane</keyword>
<keyword id="KW-0653">Protein transport</keyword>
<keyword id="KW-0811">Translocation</keyword>
<keyword id="KW-0812">Transmembrane</keyword>
<keyword id="KW-1133">Transmembrane helix</keyword>
<keyword id="KW-0813">Transport</keyword>
<name>TATA_RHOPA</name>
<protein>
    <recommendedName>
        <fullName evidence="1">Sec-independent protein translocase protein TatA</fullName>
    </recommendedName>
</protein>
<comment type="function">
    <text evidence="1">Part of the twin-arginine translocation (Tat) system that transports large folded proteins containing a characteristic twin-arginine motif in their signal peptide across membranes. TatA could form the protein-conducting channel of the Tat system.</text>
</comment>
<comment type="subunit">
    <text evidence="1">The Tat system comprises two distinct complexes: a TatABC complex, containing multiple copies of TatA, TatB and TatC subunits, and a separate TatA complex, containing only TatA subunits. Substrates initially bind to the TatABC complex, which probably triggers association of the separate TatA complex to form the active translocon.</text>
</comment>
<comment type="subcellular location">
    <subcellularLocation>
        <location evidence="1">Cell inner membrane</location>
        <topology evidence="1">Single-pass membrane protein</topology>
    </subcellularLocation>
</comment>
<comment type="similarity">
    <text evidence="1">Belongs to the TatA/E family.</text>
</comment>
<dbReference type="EMBL" id="BX572602">
    <property type="protein sequence ID" value="CAE28290.1"/>
    <property type="molecule type" value="Genomic_DNA"/>
</dbReference>
<dbReference type="RefSeq" id="WP_011158398.1">
    <property type="nucleotide sequence ID" value="NZ_CP116810.1"/>
</dbReference>
<dbReference type="SMR" id="Q6N5X1"/>
<dbReference type="STRING" id="258594.RPA2849"/>
<dbReference type="eggNOG" id="COG1826">
    <property type="taxonomic scope" value="Bacteria"/>
</dbReference>
<dbReference type="HOGENOM" id="CLU_086034_5_0_5"/>
<dbReference type="PhylomeDB" id="Q6N5X1"/>
<dbReference type="GO" id="GO:0033281">
    <property type="term" value="C:TAT protein transport complex"/>
    <property type="evidence" value="ECO:0007669"/>
    <property type="project" value="UniProtKB-UniRule"/>
</dbReference>
<dbReference type="GO" id="GO:0008320">
    <property type="term" value="F:protein transmembrane transporter activity"/>
    <property type="evidence" value="ECO:0007669"/>
    <property type="project" value="UniProtKB-UniRule"/>
</dbReference>
<dbReference type="GO" id="GO:0043953">
    <property type="term" value="P:protein transport by the Tat complex"/>
    <property type="evidence" value="ECO:0007669"/>
    <property type="project" value="UniProtKB-UniRule"/>
</dbReference>
<dbReference type="Gene3D" id="1.20.5.3310">
    <property type="match status" value="1"/>
</dbReference>
<dbReference type="HAMAP" id="MF_00236">
    <property type="entry name" value="TatA_E"/>
    <property type="match status" value="1"/>
</dbReference>
<dbReference type="InterPro" id="IPR003369">
    <property type="entry name" value="TatA/B/E"/>
</dbReference>
<dbReference type="InterPro" id="IPR006312">
    <property type="entry name" value="TatA/E"/>
</dbReference>
<dbReference type="NCBIfam" id="NF001940">
    <property type="entry name" value="PRK00720.1"/>
    <property type="match status" value="1"/>
</dbReference>
<dbReference type="NCBIfam" id="TIGR01411">
    <property type="entry name" value="tatAE"/>
    <property type="match status" value="1"/>
</dbReference>
<dbReference type="PANTHER" id="PTHR42982">
    <property type="entry name" value="SEC-INDEPENDENT PROTEIN TRANSLOCASE PROTEIN TATA"/>
    <property type="match status" value="1"/>
</dbReference>
<dbReference type="PANTHER" id="PTHR42982:SF1">
    <property type="entry name" value="SEC-INDEPENDENT PROTEIN TRANSLOCASE PROTEIN TATA"/>
    <property type="match status" value="1"/>
</dbReference>
<dbReference type="Pfam" id="PF02416">
    <property type="entry name" value="TatA_B_E"/>
    <property type="match status" value="1"/>
</dbReference>
<organism>
    <name type="scientific">Rhodopseudomonas palustris (strain ATCC BAA-98 / CGA009)</name>
    <dbReference type="NCBI Taxonomy" id="258594"/>
    <lineage>
        <taxon>Bacteria</taxon>
        <taxon>Pseudomonadati</taxon>
        <taxon>Pseudomonadota</taxon>
        <taxon>Alphaproteobacteria</taxon>
        <taxon>Hyphomicrobiales</taxon>
        <taxon>Nitrobacteraceae</taxon>
        <taxon>Rhodopseudomonas</taxon>
    </lineage>
</organism>
<evidence type="ECO:0000255" key="1">
    <source>
        <dbReference type="HAMAP-Rule" id="MF_00236"/>
    </source>
</evidence>
<evidence type="ECO:0000256" key="2">
    <source>
        <dbReference type="SAM" id="MobiDB-lite"/>
    </source>
</evidence>
<gene>
    <name evidence="1" type="primary">tatA</name>
    <name type="ordered locus">RPA2849</name>
</gene>
<sequence>MGSLSIWHWIVVIAVVLLLFGRGKISDLMGDVAQGIKSFKKGLQDDEKTAEKSEPVKSIDHTSTPGATNRTDVGSKAV</sequence>